<comment type="function">
    <text>Involved in oxygen transport from the lung to the various peripheral tissues.</text>
</comment>
<comment type="function">
    <molecule>Hemopressin</molecule>
    <text evidence="2">Hemopressin acts as an antagonist peptide of the cannabinoid receptor CNR1. Hemopressin-binding efficiently blocks cannabinoid receptor CNR1 and subsequent signaling.</text>
</comment>
<comment type="subunit">
    <text>Heterotetramer of two alpha chains and two beta chains.</text>
</comment>
<comment type="tissue specificity">
    <text>Red blood cells.</text>
</comment>
<comment type="miscellaneous">
    <text>This alpha chain has an extra residue (Gln-116) in the region between the G and H helices.</text>
</comment>
<comment type="similarity">
    <text evidence="4">Belongs to the globin family.</text>
</comment>
<organism>
    <name type="scientific">Procavia capensis habessinica</name>
    <name type="common">Abyssinian hyrax</name>
    <dbReference type="NCBI Taxonomy" id="9814"/>
    <lineage>
        <taxon>Eukaryota</taxon>
        <taxon>Metazoa</taxon>
        <taxon>Chordata</taxon>
        <taxon>Craniata</taxon>
        <taxon>Vertebrata</taxon>
        <taxon>Euteleostomi</taxon>
        <taxon>Mammalia</taxon>
        <taxon>Eutheria</taxon>
        <taxon>Afrotheria</taxon>
        <taxon>Hyracoidea</taxon>
        <taxon>Procaviidae</taxon>
        <taxon>Procavia</taxon>
    </lineage>
</organism>
<protein>
    <recommendedName>
        <fullName>Hemoglobin subunit alpha</fullName>
    </recommendedName>
    <alternativeName>
        <fullName>Alpha-globin</fullName>
    </alternativeName>
    <alternativeName>
        <fullName>Hemoglobin alpha chain</fullName>
    </alternativeName>
    <component>
        <recommendedName>
            <fullName evidence="2">Hemopressin</fullName>
        </recommendedName>
    </component>
</protein>
<gene>
    <name type="primary">HBA</name>
</gene>
<proteinExistence type="evidence at protein level"/>
<accession>P01957</accession>
<evidence type="ECO:0000250" key="1">
    <source>
        <dbReference type="UniProtKB" id="P01942"/>
    </source>
</evidence>
<evidence type="ECO:0000250" key="2">
    <source>
        <dbReference type="UniProtKB" id="P01946"/>
    </source>
</evidence>
<evidence type="ECO:0000250" key="3">
    <source>
        <dbReference type="UniProtKB" id="P69905"/>
    </source>
</evidence>
<evidence type="ECO:0000255" key="4">
    <source>
        <dbReference type="PROSITE-ProRule" id="PRU00238"/>
    </source>
</evidence>
<feature type="chain" id="PRO_0000052739" description="Hemoglobin subunit alpha">
    <location>
        <begin position="1"/>
        <end position="142"/>
    </location>
</feature>
<feature type="peptide" id="PRO_0000455931" description="Hemopressin" evidence="2">
    <location>
        <begin position="95"/>
        <end position="103"/>
    </location>
</feature>
<feature type="domain" description="Globin" evidence="4">
    <location>
        <begin position="1"/>
        <end position="142"/>
    </location>
</feature>
<feature type="binding site" evidence="4">
    <location>
        <position position="58"/>
    </location>
    <ligand>
        <name>O2</name>
        <dbReference type="ChEBI" id="CHEBI:15379"/>
    </ligand>
</feature>
<feature type="binding site" description="proximal binding residue" evidence="4">
    <location>
        <position position="87"/>
    </location>
    <ligand>
        <name>heme b</name>
        <dbReference type="ChEBI" id="CHEBI:60344"/>
    </ligand>
    <ligandPart>
        <name>Fe</name>
        <dbReference type="ChEBI" id="CHEBI:18248"/>
    </ligandPart>
</feature>
<feature type="modified residue" description="Phosphoserine" evidence="3">
    <location>
        <position position="3"/>
    </location>
</feature>
<feature type="modified residue" description="N6-succinyllysine" evidence="1">
    <location>
        <position position="7"/>
    </location>
</feature>
<feature type="modified residue" description="N6-succinyllysine" evidence="1">
    <location>
        <position position="11"/>
    </location>
</feature>
<feature type="modified residue" description="N6-acetyllysine; alternate" evidence="3">
    <location>
        <position position="16"/>
    </location>
</feature>
<feature type="modified residue" description="N6-succinyllysine; alternate" evidence="1">
    <location>
        <position position="16"/>
    </location>
</feature>
<feature type="modified residue" description="Phosphotyrosine" evidence="3">
    <location>
        <position position="24"/>
    </location>
</feature>
<feature type="modified residue" description="Phosphoserine" evidence="3">
    <location>
        <position position="35"/>
    </location>
</feature>
<feature type="modified residue" description="N6-succinyllysine" evidence="1">
    <location>
        <position position="40"/>
    </location>
</feature>
<feature type="modified residue" description="Phosphoserine" evidence="1">
    <location>
        <position position="102"/>
    </location>
</feature>
<feature type="modified residue" description="Phosphothreonine" evidence="1">
    <location>
        <position position="108"/>
    </location>
</feature>
<feature type="modified residue" description="Phosphoserine" evidence="1">
    <location>
        <position position="125"/>
    </location>
</feature>
<feature type="modified residue" description="Phosphothreonine" evidence="1">
    <location>
        <position position="135"/>
    </location>
</feature>
<feature type="modified residue" description="Phosphothreonine" evidence="1">
    <location>
        <position position="138"/>
    </location>
</feature>
<feature type="modified residue" description="Phosphoserine" evidence="1">
    <location>
        <position position="139"/>
    </location>
</feature>
<reference key="1">
    <citation type="journal article" date="1983" name="Hoppe-Seyler's Z. Physiol. Chem.">
        <title>The primary structure of hemoglobins of the rock hyrax (Procavia habessinica, Hyracoidea): insertion of glutamine in the alpha chains.</title>
        <authorList>
            <person name="Kleinschmidt T."/>
            <person name="Braunitzer G."/>
        </authorList>
    </citation>
    <scope>PROTEIN SEQUENCE</scope>
</reference>
<keyword id="KW-0007">Acetylation</keyword>
<keyword id="KW-0903">Direct protein sequencing</keyword>
<keyword id="KW-0349">Heme</keyword>
<keyword id="KW-0408">Iron</keyword>
<keyword id="KW-0479">Metal-binding</keyword>
<keyword id="KW-0561">Oxygen transport</keyword>
<keyword id="KW-0597">Phosphoprotein</keyword>
<keyword id="KW-0813">Transport</keyword>
<dbReference type="PIR" id="A02280">
    <property type="entry name" value="HAHXR"/>
</dbReference>
<dbReference type="SMR" id="P01957"/>
<dbReference type="GO" id="GO:0072562">
    <property type="term" value="C:blood microparticle"/>
    <property type="evidence" value="ECO:0007669"/>
    <property type="project" value="TreeGrafter"/>
</dbReference>
<dbReference type="GO" id="GO:0031838">
    <property type="term" value="C:haptoglobin-hemoglobin complex"/>
    <property type="evidence" value="ECO:0007669"/>
    <property type="project" value="TreeGrafter"/>
</dbReference>
<dbReference type="GO" id="GO:0005833">
    <property type="term" value="C:hemoglobin complex"/>
    <property type="evidence" value="ECO:0007669"/>
    <property type="project" value="InterPro"/>
</dbReference>
<dbReference type="GO" id="GO:0031720">
    <property type="term" value="F:haptoglobin binding"/>
    <property type="evidence" value="ECO:0007669"/>
    <property type="project" value="TreeGrafter"/>
</dbReference>
<dbReference type="GO" id="GO:0020037">
    <property type="term" value="F:heme binding"/>
    <property type="evidence" value="ECO:0007669"/>
    <property type="project" value="InterPro"/>
</dbReference>
<dbReference type="GO" id="GO:0005506">
    <property type="term" value="F:iron ion binding"/>
    <property type="evidence" value="ECO:0007669"/>
    <property type="project" value="InterPro"/>
</dbReference>
<dbReference type="GO" id="GO:0043177">
    <property type="term" value="F:organic acid binding"/>
    <property type="evidence" value="ECO:0007669"/>
    <property type="project" value="TreeGrafter"/>
</dbReference>
<dbReference type="GO" id="GO:0019825">
    <property type="term" value="F:oxygen binding"/>
    <property type="evidence" value="ECO:0007669"/>
    <property type="project" value="InterPro"/>
</dbReference>
<dbReference type="GO" id="GO:0005344">
    <property type="term" value="F:oxygen carrier activity"/>
    <property type="evidence" value="ECO:0007669"/>
    <property type="project" value="UniProtKB-KW"/>
</dbReference>
<dbReference type="GO" id="GO:0004601">
    <property type="term" value="F:peroxidase activity"/>
    <property type="evidence" value="ECO:0007669"/>
    <property type="project" value="TreeGrafter"/>
</dbReference>
<dbReference type="GO" id="GO:0042744">
    <property type="term" value="P:hydrogen peroxide catabolic process"/>
    <property type="evidence" value="ECO:0007669"/>
    <property type="project" value="TreeGrafter"/>
</dbReference>
<dbReference type="CDD" id="cd08927">
    <property type="entry name" value="Hb-alpha-like"/>
    <property type="match status" value="1"/>
</dbReference>
<dbReference type="FunFam" id="1.10.490.10:FF:000002">
    <property type="entry name" value="Hemoglobin subunit alpha"/>
    <property type="match status" value="1"/>
</dbReference>
<dbReference type="Gene3D" id="1.10.490.10">
    <property type="entry name" value="Globins"/>
    <property type="match status" value="1"/>
</dbReference>
<dbReference type="InterPro" id="IPR000971">
    <property type="entry name" value="Globin"/>
</dbReference>
<dbReference type="InterPro" id="IPR009050">
    <property type="entry name" value="Globin-like_sf"/>
</dbReference>
<dbReference type="InterPro" id="IPR012292">
    <property type="entry name" value="Globin/Proto"/>
</dbReference>
<dbReference type="InterPro" id="IPR002338">
    <property type="entry name" value="Hemoglobin_a-typ"/>
</dbReference>
<dbReference type="InterPro" id="IPR050056">
    <property type="entry name" value="Hemoglobin_oxygen_transport"/>
</dbReference>
<dbReference type="InterPro" id="IPR002339">
    <property type="entry name" value="Hemoglobin_pi"/>
</dbReference>
<dbReference type="PANTHER" id="PTHR11442">
    <property type="entry name" value="HEMOGLOBIN FAMILY MEMBER"/>
    <property type="match status" value="1"/>
</dbReference>
<dbReference type="PANTHER" id="PTHR11442:SF48">
    <property type="entry name" value="HEMOGLOBIN SUBUNIT ALPHA"/>
    <property type="match status" value="1"/>
</dbReference>
<dbReference type="Pfam" id="PF00042">
    <property type="entry name" value="Globin"/>
    <property type="match status" value="1"/>
</dbReference>
<dbReference type="PRINTS" id="PR00612">
    <property type="entry name" value="ALPHAHAEM"/>
</dbReference>
<dbReference type="PRINTS" id="PR00815">
    <property type="entry name" value="PIHAEM"/>
</dbReference>
<dbReference type="SUPFAM" id="SSF46458">
    <property type="entry name" value="Globin-like"/>
    <property type="match status" value="1"/>
</dbReference>
<dbReference type="PROSITE" id="PS01033">
    <property type="entry name" value="GLOBIN"/>
    <property type="match status" value="1"/>
</dbReference>
<name>HBA_PROHA</name>
<sequence>VLSAADKNNVKGAWEKVGTHAGEYGAEALERMFLSFPTTKTYFPHFDLTHGSAQVKAHGQKVGAALTKAVGHLDDLPNALSDLSDLHAHKLRVDPVNFKLLSHCLLVTLSRHLPEQEFTPAVHASLDKFFSNVSTVLTSKYR</sequence>